<dbReference type="GO" id="GO:0005576">
    <property type="term" value="C:extracellular region"/>
    <property type="evidence" value="ECO:0007669"/>
    <property type="project" value="UniProtKB-SubCell"/>
</dbReference>
<dbReference type="GO" id="GO:0090729">
    <property type="term" value="F:toxin activity"/>
    <property type="evidence" value="ECO:0007669"/>
    <property type="project" value="UniProtKB-KW"/>
</dbReference>
<accession>P0CI21</accession>
<reference key="1">
    <citation type="journal article" date="2007" name="J. Exp. Zool. B Mol. Dev. Evol.">
        <title>Venomous auger snail Hastula (Impages) hectica (Linnaeus, 1758): molecular phylogeny, foregut anatomy and comparative toxinology.</title>
        <authorList>
            <person name="Imperial J.S."/>
            <person name="Kantor Y."/>
            <person name="Watkins M."/>
            <person name="Heralde F.M. III"/>
            <person name="Stevenson B."/>
            <person name="Chen P."/>
            <person name="Hansson K."/>
            <person name="Stenflo J."/>
            <person name="Ownby J.P."/>
            <person name="Bouchet P."/>
            <person name="Olivera B.M."/>
        </authorList>
    </citation>
    <scope>NUCLEOTIDE SEQUENCE [MRNA]</scope>
    <source>
        <tissue>Venom duct</tissue>
    </source>
</reference>
<name>TE53_HASHE</name>
<comment type="subcellular location">
    <subcellularLocation>
        <location evidence="1">Secreted</location>
    </subcellularLocation>
</comment>
<comment type="tissue specificity">
    <text>Expressed by the venom duct.</text>
</comment>
<comment type="domain">
    <text>The cysteine framework is XIV (C-C-C-C).</text>
</comment>
<comment type="PTM">
    <text evidence="1">Contains 2 disulfide bonds.</text>
</comment>
<protein>
    <recommendedName>
        <fullName>Augerpeptide hhe53</fullName>
    </recommendedName>
</protein>
<sequence length="38" mass="4256">GLSQSGCQAFTGRWCVGCERLRSRVVWECSPKRVVNSI</sequence>
<evidence type="ECO:0000250" key="1"/>
<feature type="chain" id="PRO_0000402150" description="Augerpeptide hhe53">
    <location>
        <begin position="1"/>
        <end position="38"/>
    </location>
</feature>
<keyword id="KW-1015">Disulfide bond</keyword>
<keyword id="KW-0964">Secreted</keyword>
<keyword id="KW-0800">Toxin</keyword>
<proteinExistence type="evidence at transcript level"/>
<organism>
    <name type="scientific">Hastula hectica</name>
    <name type="common">Sea snail</name>
    <name type="synonym">Impages hectica</name>
    <dbReference type="NCBI Taxonomy" id="745793"/>
    <lineage>
        <taxon>Eukaryota</taxon>
        <taxon>Metazoa</taxon>
        <taxon>Spiralia</taxon>
        <taxon>Lophotrochozoa</taxon>
        <taxon>Mollusca</taxon>
        <taxon>Gastropoda</taxon>
        <taxon>Caenogastropoda</taxon>
        <taxon>Neogastropoda</taxon>
        <taxon>Conoidea</taxon>
        <taxon>Terebridae</taxon>
        <taxon>Hastula</taxon>
    </lineage>
</organism>